<dbReference type="EMBL" id="BX072538">
    <property type="status" value="NOT_ANNOTATED_CDS"/>
    <property type="molecule type" value="Genomic_DNA"/>
</dbReference>
<dbReference type="RefSeq" id="XP_005164527.1">
    <property type="nucleotide sequence ID" value="XM_005164470.3"/>
</dbReference>
<dbReference type="SMR" id="A0A2R9YJI3"/>
<dbReference type="FunCoup" id="A0A2R9YJI3">
    <property type="interactions" value="930"/>
</dbReference>
<dbReference type="STRING" id="7955.ENSDARP00000107735"/>
<dbReference type="PaxDb" id="7955-ENSDARP00000107735"/>
<dbReference type="Ensembl" id="ENSDART00000128807">
    <property type="protein sequence ID" value="ENSDARP00000107735"/>
    <property type="gene ID" value="ENSDARG00000004592"/>
</dbReference>
<dbReference type="AGR" id="ZFIN:ZDB-GENE-041210-48"/>
<dbReference type="ZFIN" id="ZDB-GENE-041210-48">
    <property type="gene designation" value="gpr22a"/>
</dbReference>
<dbReference type="InParanoid" id="A0A2R9YJI3"/>
<dbReference type="OMA" id="RIVHTEC"/>
<dbReference type="OrthoDB" id="6156007at2759"/>
<dbReference type="PRO" id="PR:A0A2R9YJI3"/>
<dbReference type="Proteomes" id="UP000000437">
    <property type="component" value="Chromosome 4"/>
</dbReference>
<dbReference type="Bgee" id="ENSDARG00000004592">
    <property type="expression patterns" value="Expressed in heart and 31 other cell types or tissues"/>
</dbReference>
<dbReference type="ExpressionAtlas" id="A0A2R9YJI3">
    <property type="expression patterns" value="baseline"/>
</dbReference>
<dbReference type="GO" id="GO:0005886">
    <property type="term" value="C:plasma membrane"/>
    <property type="evidence" value="ECO:0000250"/>
    <property type="project" value="UniProtKB"/>
</dbReference>
<dbReference type="GO" id="GO:0004930">
    <property type="term" value="F:G protein-coupled receptor activity"/>
    <property type="evidence" value="ECO:0000318"/>
    <property type="project" value="GO_Central"/>
</dbReference>
<dbReference type="GO" id="GO:0030030">
    <property type="term" value="P:cell projection organization"/>
    <property type="evidence" value="ECO:0007669"/>
    <property type="project" value="UniProtKB-KW"/>
</dbReference>
<dbReference type="GO" id="GO:0032870">
    <property type="term" value="P:cellular response to hormone stimulus"/>
    <property type="evidence" value="ECO:0000318"/>
    <property type="project" value="GO_Central"/>
</dbReference>
<dbReference type="GO" id="GO:0071907">
    <property type="term" value="P:determination of digestive tract left/right asymmetry"/>
    <property type="evidence" value="ECO:0000315"/>
    <property type="project" value="ZFIN"/>
</dbReference>
<dbReference type="GO" id="GO:0061371">
    <property type="term" value="P:determination of heart left/right asymmetry"/>
    <property type="evidence" value="ECO:0000315"/>
    <property type="project" value="ZFIN"/>
</dbReference>
<dbReference type="GO" id="GO:0003140">
    <property type="term" value="P:determination of left/right asymmetry in lateral mesoderm"/>
    <property type="evidence" value="ECO:0000315"/>
    <property type="project" value="ZFIN"/>
</dbReference>
<dbReference type="GO" id="GO:0007368">
    <property type="term" value="P:determination of left/right symmetry"/>
    <property type="evidence" value="ECO:0000315"/>
    <property type="project" value="ZFIN"/>
</dbReference>
<dbReference type="GO" id="GO:0071910">
    <property type="term" value="P:determination of liver left/right asymmetry"/>
    <property type="evidence" value="ECO:0000315"/>
    <property type="project" value="ZFIN"/>
</dbReference>
<dbReference type="GO" id="GO:0007186">
    <property type="term" value="P:G protein-coupled receptor signaling pathway"/>
    <property type="evidence" value="ECO:0000318"/>
    <property type="project" value="GO_Central"/>
</dbReference>
<dbReference type="GO" id="GO:0001947">
    <property type="term" value="P:heart looping"/>
    <property type="evidence" value="ECO:0000315"/>
    <property type="project" value="ZFIN"/>
</dbReference>
<dbReference type="GO" id="GO:0070121">
    <property type="term" value="P:Kupffer's vesicle development"/>
    <property type="evidence" value="ECO:0000315"/>
    <property type="project" value="ZFIN"/>
</dbReference>
<dbReference type="CDD" id="cd00637">
    <property type="entry name" value="7tm_classA_rhodopsin-like"/>
    <property type="match status" value="1"/>
</dbReference>
<dbReference type="FunFam" id="1.20.1070.10:FF:000084">
    <property type="entry name" value="Probable G-protein coupled receptor 22"/>
    <property type="match status" value="1"/>
</dbReference>
<dbReference type="FunFam" id="1.20.1070.10:FF:000116">
    <property type="entry name" value="probable G-protein coupled receptor 22"/>
    <property type="match status" value="1"/>
</dbReference>
<dbReference type="Gene3D" id="1.20.1070.10">
    <property type="entry name" value="Rhodopsin 7-helix transmembrane proteins"/>
    <property type="match status" value="2"/>
</dbReference>
<dbReference type="InterPro" id="IPR000276">
    <property type="entry name" value="GPCR_Rhodpsn"/>
</dbReference>
<dbReference type="InterPro" id="IPR017452">
    <property type="entry name" value="GPCR_Rhodpsn_7TM"/>
</dbReference>
<dbReference type="PANTHER" id="PTHR24241:SF1">
    <property type="entry name" value="G-PROTEIN COUPLED RECEPTOR 22"/>
    <property type="match status" value="1"/>
</dbReference>
<dbReference type="PANTHER" id="PTHR24241">
    <property type="entry name" value="NEUROPEPTIDE RECEPTOR-RELATED G-PROTEIN COUPLED RECEPTOR"/>
    <property type="match status" value="1"/>
</dbReference>
<dbReference type="Pfam" id="PF00001">
    <property type="entry name" value="7tm_1"/>
    <property type="match status" value="1"/>
</dbReference>
<dbReference type="PRINTS" id="PR00237">
    <property type="entry name" value="GPCRRHODOPSN"/>
</dbReference>
<dbReference type="SUPFAM" id="SSF81321">
    <property type="entry name" value="Family A G protein-coupled receptor-like"/>
    <property type="match status" value="2"/>
</dbReference>
<dbReference type="PROSITE" id="PS50262">
    <property type="entry name" value="G_PROTEIN_RECEP_F1_2"/>
    <property type="match status" value="1"/>
</dbReference>
<reference key="1">
    <citation type="journal article" date="2013" name="Nature">
        <title>The zebrafish reference genome sequence and its relationship to the human genome.</title>
        <authorList>
            <person name="Howe K."/>
            <person name="Clark M.D."/>
            <person name="Torroja C.F."/>
            <person name="Torrance J."/>
            <person name="Berthelot C."/>
            <person name="Muffato M."/>
            <person name="Collins J.E."/>
            <person name="Humphray S."/>
            <person name="McLaren K."/>
            <person name="Matthews L."/>
            <person name="McLaren S."/>
            <person name="Sealy I."/>
            <person name="Caccamo M."/>
            <person name="Churcher C."/>
            <person name="Scott C."/>
            <person name="Barrett J.C."/>
            <person name="Koch R."/>
            <person name="Rauch G.J."/>
            <person name="White S."/>
            <person name="Chow W."/>
            <person name="Kilian B."/>
            <person name="Quintais L.T."/>
            <person name="Guerra-Assuncao J.A."/>
            <person name="Zhou Y."/>
            <person name="Gu Y."/>
            <person name="Yen J."/>
            <person name="Vogel J.H."/>
            <person name="Eyre T."/>
            <person name="Redmond S."/>
            <person name="Banerjee R."/>
            <person name="Chi J."/>
            <person name="Fu B."/>
            <person name="Langley E."/>
            <person name="Maguire S.F."/>
            <person name="Laird G.K."/>
            <person name="Lloyd D."/>
            <person name="Kenyon E."/>
            <person name="Donaldson S."/>
            <person name="Sehra H."/>
            <person name="Almeida-King J."/>
            <person name="Loveland J."/>
            <person name="Trevanion S."/>
            <person name="Jones M."/>
            <person name="Quail M."/>
            <person name="Willey D."/>
            <person name="Hunt A."/>
            <person name="Burton J."/>
            <person name="Sims S."/>
            <person name="McLay K."/>
            <person name="Plumb B."/>
            <person name="Davis J."/>
            <person name="Clee C."/>
            <person name="Oliver K."/>
            <person name="Clark R."/>
            <person name="Riddle C."/>
            <person name="Elliot D."/>
            <person name="Threadgold G."/>
            <person name="Harden G."/>
            <person name="Ware D."/>
            <person name="Begum S."/>
            <person name="Mortimore B."/>
            <person name="Kerry G."/>
            <person name="Heath P."/>
            <person name="Phillimore B."/>
            <person name="Tracey A."/>
            <person name="Corby N."/>
            <person name="Dunn M."/>
            <person name="Johnson C."/>
            <person name="Wood J."/>
            <person name="Clark S."/>
            <person name="Pelan S."/>
            <person name="Griffiths G."/>
            <person name="Smith M."/>
            <person name="Glithero R."/>
            <person name="Howden P."/>
            <person name="Barker N."/>
            <person name="Lloyd C."/>
            <person name="Stevens C."/>
            <person name="Harley J."/>
            <person name="Holt K."/>
            <person name="Panagiotidis G."/>
            <person name="Lovell J."/>
            <person name="Beasley H."/>
            <person name="Henderson C."/>
            <person name="Gordon D."/>
            <person name="Auger K."/>
            <person name="Wright D."/>
            <person name="Collins J."/>
            <person name="Raisen C."/>
            <person name="Dyer L."/>
            <person name="Leung K."/>
            <person name="Robertson L."/>
            <person name="Ambridge K."/>
            <person name="Leongamornlert D."/>
            <person name="McGuire S."/>
            <person name="Gilderthorp R."/>
            <person name="Griffiths C."/>
            <person name="Manthravadi D."/>
            <person name="Nichol S."/>
            <person name="Barker G."/>
            <person name="Whitehead S."/>
            <person name="Kay M."/>
            <person name="Brown J."/>
            <person name="Murnane C."/>
            <person name="Gray E."/>
            <person name="Humphries M."/>
            <person name="Sycamore N."/>
            <person name="Barker D."/>
            <person name="Saunders D."/>
            <person name="Wallis J."/>
            <person name="Babbage A."/>
            <person name="Hammond S."/>
            <person name="Mashreghi-Mohammadi M."/>
            <person name="Barr L."/>
            <person name="Martin S."/>
            <person name="Wray P."/>
            <person name="Ellington A."/>
            <person name="Matthews N."/>
            <person name="Ellwood M."/>
            <person name="Woodmansey R."/>
            <person name="Clark G."/>
            <person name="Cooper J."/>
            <person name="Tromans A."/>
            <person name="Grafham D."/>
            <person name="Skuce C."/>
            <person name="Pandian R."/>
            <person name="Andrews R."/>
            <person name="Harrison E."/>
            <person name="Kimberley A."/>
            <person name="Garnett J."/>
            <person name="Fosker N."/>
            <person name="Hall R."/>
            <person name="Garner P."/>
            <person name="Kelly D."/>
            <person name="Bird C."/>
            <person name="Palmer S."/>
            <person name="Gehring I."/>
            <person name="Berger A."/>
            <person name="Dooley C.M."/>
            <person name="Ersan-Urun Z."/>
            <person name="Eser C."/>
            <person name="Geiger H."/>
            <person name="Geisler M."/>
            <person name="Karotki L."/>
            <person name="Kirn A."/>
            <person name="Konantz J."/>
            <person name="Konantz M."/>
            <person name="Oberlander M."/>
            <person name="Rudolph-Geiger S."/>
            <person name="Teucke M."/>
            <person name="Lanz C."/>
            <person name="Raddatz G."/>
            <person name="Osoegawa K."/>
            <person name="Zhu B."/>
            <person name="Rapp A."/>
            <person name="Widaa S."/>
            <person name="Langford C."/>
            <person name="Yang F."/>
            <person name="Schuster S.C."/>
            <person name="Carter N.P."/>
            <person name="Harrow J."/>
            <person name="Ning Z."/>
            <person name="Herrero J."/>
            <person name="Searle S.M."/>
            <person name="Enright A."/>
            <person name="Geisler R."/>
            <person name="Plasterk R.H."/>
            <person name="Lee C."/>
            <person name="Westerfield M."/>
            <person name="de Jong P.J."/>
            <person name="Zon L.I."/>
            <person name="Postlethwait J.H."/>
            <person name="Nusslein-Volhard C."/>
            <person name="Hubbard T.J."/>
            <person name="Roest Crollius H."/>
            <person name="Rogers J."/>
            <person name="Stemple D.L."/>
        </authorList>
    </citation>
    <scope>NUCLEOTIDE SEQUENCE [LARGE SCALE GENOMIC DNA]</scope>
    <source>
        <strain>Tuebingen</strain>
    </source>
</reference>
<reference key="2">
    <citation type="journal article" date="2014" name="PLoS ONE">
        <title>Orphan G-protein coupled receptor 22 (Gpr22) regulates cilia length and structure in the zebrafish Kupffer's vesicle.</title>
        <authorList>
            <person name="Verleyen D."/>
            <person name="Luyten F.P."/>
            <person name="Tylzanowski P."/>
        </authorList>
    </citation>
    <scope>DISRUPTION PHENOTYPE</scope>
    <scope>FUNCTION</scope>
    <scope>DEVELOPMENTAL STAGE</scope>
</reference>
<evidence type="ECO:0000250" key="1">
    <source>
        <dbReference type="UniProtKB" id="D4A3U0"/>
    </source>
</evidence>
<evidence type="ECO:0000255" key="2"/>
<evidence type="ECO:0000255" key="3">
    <source>
        <dbReference type="PROSITE-ProRule" id="PRU00521"/>
    </source>
</evidence>
<evidence type="ECO:0000256" key="4">
    <source>
        <dbReference type="SAM" id="MobiDB-lite"/>
    </source>
</evidence>
<evidence type="ECO:0000269" key="5">
    <source>
    </source>
</evidence>
<evidence type="ECO:0000305" key="6"/>
<comment type="function">
    <text evidence="5">Orphan G-protein coupled receptor that regulates cilia length and structure in the Kupffer's vesicle leading to the left-right asymmetry development by establishing a directional fluid flow.</text>
</comment>
<comment type="subcellular location">
    <subcellularLocation>
        <location evidence="1">Cell membrane</location>
        <topology evidence="2">Multi-pass membrane protein</topology>
    </subcellularLocation>
</comment>
<comment type="developmental stage">
    <text evidence="5">Expressed ubiquitously during early stages of development. From bud stage onwards, the expression pattern becomes restricted to the axial structures and the developing Kupffer's vesicle.</text>
</comment>
<comment type="disruption phenotype">
    <text evidence="5">Morpholino knockdown of the protein leads to defective left-right (LR) axis formation in the embryo. Cilia number and length are reduced in the Kupffer's vesicle (KV). Morpholino knockdown of the protein in Kupffer's vesicle alone is still able to generate the phenotype, indicating that Gpr22 regulates LR asymmetry through the KV.</text>
</comment>
<comment type="similarity">
    <text evidence="3">Belongs to the G-protein coupled receptor 1 family.</text>
</comment>
<proteinExistence type="evidence at transcript level"/>
<organism>
    <name type="scientific">Danio rerio</name>
    <name type="common">Zebrafish</name>
    <name type="synonym">Brachydanio rerio</name>
    <dbReference type="NCBI Taxonomy" id="7955"/>
    <lineage>
        <taxon>Eukaryota</taxon>
        <taxon>Metazoa</taxon>
        <taxon>Chordata</taxon>
        <taxon>Craniata</taxon>
        <taxon>Vertebrata</taxon>
        <taxon>Euteleostomi</taxon>
        <taxon>Actinopterygii</taxon>
        <taxon>Neopterygii</taxon>
        <taxon>Teleostei</taxon>
        <taxon>Ostariophysi</taxon>
        <taxon>Cypriniformes</taxon>
        <taxon>Danionidae</taxon>
        <taxon>Danioninae</taxon>
        <taxon>Danio</taxon>
    </lineage>
</organism>
<keyword id="KW-1003">Cell membrane</keyword>
<keyword id="KW-0970">Cilium biogenesis/degradation</keyword>
<keyword id="KW-0297">G-protein coupled receptor</keyword>
<keyword id="KW-0472">Membrane</keyword>
<keyword id="KW-0675">Receptor</keyword>
<keyword id="KW-1185">Reference proteome</keyword>
<keyword id="KW-0807">Transducer</keyword>
<keyword id="KW-0812">Transmembrane</keyword>
<keyword id="KW-1133">Transmembrane helix</keyword>
<gene>
    <name type="primary">gpr22a</name>
</gene>
<accession>A0A2R9YJI3</accession>
<sequence length="460" mass="51763">MESMPSSLTHQRFGLLNKHLTRTGNTREGRMHTPPVLGFQAIMSNVTVLDNIEPLDFEMDLKTPYPVSFQVSLTGFLMLEIVLGLSSNLTVLALYCMKSNLVSSVSNIVTMNLHVLDVLVCVGCIPLTIVVVLLPLEGNNALICCFHEACVSFASVATAANVLAITLDRYDISVRPANRVLTMGRAVALLGSIWALSFFSFLVPFIEEGFFSQAGNERNQTEAEEPSNEYYTELGLYYHLLAQIPIFFFTAVVMLVTYYKILQALNIRIGTRFHSVPKKKPRKKKTISMTSTQPESTDASQSSAGRNAPLGMRTSVSVIIALRRAVKRHRERRERQKRVFRMSLLIISTFLLCWTPITVLNTVILSVGPSNFTVRLRLGFLVMAYGTTIFHPLLYAFTRQKFQKVLKSKMKKRVVSVVEADPMPNNVVIHNSWIDPKRNKKVTFEETEVRQKCLSSEDVE</sequence>
<feature type="chain" id="PRO_0000445302" description="G-protein coupled receptor 22">
    <location>
        <begin position="1"/>
        <end position="460"/>
    </location>
</feature>
<feature type="topological domain" description="Cytoplasmic" evidence="6">
    <location>
        <begin position="1"/>
        <end position="74"/>
    </location>
</feature>
<feature type="transmembrane region" description="Helical; Name=1" evidence="2">
    <location>
        <begin position="75"/>
        <end position="95"/>
    </location>
</feature>
<feature type="topological domain" description="Extracellular" evidence="6">
    <location>
        <begin position="96"/>
        <end position="114"/>
    </location>
</feature>
<feature type="transmembrane region" description="Helical; Name=2" evidence="2">
    <location>
        <begin position="115"/>
        <end position="135"/>
    </location>
</feature>
<feature type="topological domain" description="Cytoplasmic" evidence="6">
    <location>
        <begin position="136"/>
        <end position="144"/>
    </location>
</feature>
<feature type="transmembrane region" description="Helical; Name=3" evidence="2">
    <location>
        <begin position="145"/>
        <end position="165"/>
    </location>
</feature>
<feature type="topological domain" description="Extracellular" evidence="6">
    <location>
        <begin position="166"/>
        <end position="185"/>
    </location>
</feature>
<feature type="transmembrane region" description="Helical; Name=4" evidence="2">
    <location>
        <begin position="186"/>
        <end position="206"/>
    </location>
</feature>
<feature type="topological domain" description="Cytoplasmic" evidence="6">
    <location>
        <begin position="207"/>
        <end position="235"/>
    </location>
</feature>
<feature type="transmembrane region" description="Helical; Name=5" evidence="2">
    <location>
        <begin position="236"/>
        <end position="256"/>
    </location>
</feature>
<feature type="topological domain" description="Extracellular" evidence="6">
    <location>
        <begin position="257"/>
        <end position="343"/>
    </location>
</feature>
<feature type="transmembrane region" description="Helical; Name=6" evidence="2">
    <location>
        <begin position="344"/>
        <end position="364"/>
    </location>
</feature>
<feature type="topological domain" description="Cytoplasmic" evidence="6">
    <location>
        <begin position="365"/>
        <end position="377"/>
    </location>
</feature>
<feature type="transmembrane region" description="Helical; Name=7" evidence="2">
    <location>
        <begin position="378"/>
        <end position="398"/>
    </location>
</feature>
<feature type="topological domain" description="Extracellular" evidence="6">
    <location>
        <begin position="399"/>
        <end position="460"/>
    </location>
</feature>
<feature type="region of interest" description="Disordered" evidence="4">
    <location>
        <begin position="276"/>
        <end position="309"/>
    </location>
</feature>
<feature type="compositionally biased region" description="Basic residues" evidence="4">
    <location>
        <begin position="276"/>
        <end position="286"/>
    </location>
</feature>
<feature type="compositionally biased region" description="Polar residues" evidence="4">
    <location>
        <begin position="287"/>
        <end position="305"/>
    </location>
</feature>
<protein>
    <recommendedName>
        <fullName>G-protein coupled receptor 22</fullName>
    </recommendedName>
</protein>
<name>GPR22_DANRE</name>